<keyword id="KW-0027">Amidation</keyword>
<keyword id="KW-0165">Cleavage on pair of basic residues</keyword>
<keyword id="KW-1015">Disulfide bond</keyword>
<keyword id="KW-0166">Nematocyst</keyword>
<keyword id="KW-0528">Neurotoxin</keyword>
<keyword id="KW-0964">Secreted</keyword>
<keyword id="KW-0732">Signal</keyword>
<keyword id="KW-0800">Toxin</keyword>
<organism>
    <name type="scientific">Epiactis japonica</name>
    <name type="common">Sea anemone</name>
    <name type="synonym">Cnidopus japonicus</name>
    <dbReference type="NCBI Taxonomy" id="58804"/>
    <lineage>
        <taxon>Eukaryota</taxon>
        <taxon>Metazoa</taxon>
        <taxon>Cnidaria</taxon>
        <taxon>Anthozoa</taxon>
        <taxon>Hexacorallia</taxon>
        <taxon>Actiniaria</taxon>
        <taxon>Actiniidae</taxon>
        <taxon>Epiactis</taxon>
    </lineage>
</organism>
<protein>
    <recommendedName>
        <fullName evidence="3">Toxin CjTL8</fullName>
    </recommendedName>
</protein>
<evidence type="ECO:0000255" key="1"/>
<evidence type="ECO:0000269" key="2">
    <source>
    </source>
</evidence>
<evidence type="ECO:0000303" key="3">
    <source>
    </source>
</evidence>
<evidence type="ECO:0000305" key="4"/>
<evidence type="ECO:0000305" key="5">
    <source>
    </source>
</evidence>
<comment type="function">
    <text evidence="2">In vivo, induces immediate paralysis on shrimps (C.multidentata), followed by death when high doses are injected. No activity is observed when injected into fly larvae (M.domestica).</text>
</comment>
<comment type="subcellular location">
    <subcellularLocation>
        <location evidence="5">Secreted</location>
    </subcellularLocation>
    <subcellularLocation>
        <location evidence="4">Nematocyst</location>
    </subcellularLocation>
</comment>
<comment type="PTM">
    <text evidence="4">Contains 3 disulfide bonds.</text>
</comment>
<comment type="toxic dose">
    <text evidence="2">LD(100) is 10 ug/g on the shrimp C.multidentata.</text>
</comment>
<comment type="caution">
    <text evidence="5">Toxicity tests have been done on recombinant non-amidated toxin.</text>
</comment>
<proteinExistence type="inferred from homology"/>
<reference key="1">
    <citation type="journal article" date="2017" name="Sci. Rep.">
        <title>Identification of unusual peptides with new Cys frameworks in the venom of the cold-water sea anemone Cnidopus japonicus.</title>
        <authorList>
            <person name="Babenko V.V."/>
            <person name="Mikov A.N."/>
            <person name="Manuvera V.A."/>
            <person name="Anikanov N.A."/>
            <person name="Kovalchuk S.I."/>
            <person name="Andreev Y.A."/>
            <person name="Logashina Y.A."/>
            <person name="Kornilov D.A."/>
            <person name="Manolov A.I."/>
            <person name="Sanamyan N.P."/>
            <person name="Sanamyan K.E."/>
            <person name="Kostryukova E.S."/>
            <person name="Kozlov S.A."/>
            <person name="Grishin E.V."/>
            <person name="Govorun V.M."/>
            <person name="Lazarev V.N."/>
        </authorList>
    </citation>
    <scope>NUCLEOTIDE SEQUENCE [MRNA]</scope>
    <scope>FUNCTION</scope>
    <scope>BIOASSAY</scope>
    <scope>TOXIC DOSE</scope>
</reference>
<sequence>MSSAIKILALLMVLVALAQAKPRKDYRAYPDFDDKSVILEDDKRCDPDKRDSVCKDVCGMLDIGTENGECPGKEVCCVDLFGR</sequence>
<dbReference type="SMR" id="P0DPE6"/>
<dbReference type="GO" id="GO:0005576">
    <property type="term" value="C:extracellular region"/>
    <property type="evidence" value="ECO:0007669"/>
    <property type="project" value="UniProtKB-SubCell"/>
</dbReference>
<dbReference type="GO" id="GO:0042151">
    <property type="term" value="C:nematocyst"/>
    <property type="evidence" value="ECO:0007669"/>
    <property type="project" value="UniProtKB-SubCell"/>
</dbReference>
<dbReference type="GO" id="GO:0090729">
    <property type="term" value="F:toxin activity"/>
    <property type="evidence" value="ECO:0007669"/>
    <property type="project" value="UniProtKB-KW"/>
</dbReference>
<feature type="signal peptide" evidence="1">
    <location>
        <begin position="1"/>
        <end position="20"/>
    </location>
</feature>
<feature type="propeptide" id="PRO_0000443395" evidence="4">
    <location>
        <begin position="21"/>
        <end position="44"/>
    </location>
</feature>
<feature type="chain" id="PRO_0000443396" description="Toxin CjTL8" evidence="5">
    <location>
        <begin position="45"/>
        <end position="81"/>
    </location>
</feature>
<feature type="modified residue" description="Phenylalanine amide" evidence="4">
    <location>
        <position position="81"/>
    </location>
</feature>
<accession>P0DPE6</accession>
<name>CJTL8_EPIJA</name>